<accession>A1B1B8</accession>
<dbReference type="EMBL" id="CP000489">
    <property type="protein sequence ID" value="ABL69312.1"/>
    <property type="molecule type" value="Genomic_DNA"/>
</dbReference>
<dbReference type="RefSeq" id="WP_011747530.1">
    <property type="nucleotide sequence ID" value="NC_008686.1"/>
</dbReference>
<dbReference type="SMR" id="A1B1B8"/>
<dbReference type="STRING" id="318586.Pden_1207"/>
<dbReference type="EnsemblBacteria" id="ABL69312">
    <property type="protein sequence ID" value="ABL69312"/>
    <property type="gene ID" value="Pden_1207"/>
</dbReference>
<dbReference type="GeneID" id="93452423"/>
<dbReference type="KEGG" id="pde:Pden_1207"/>
<dbReference type="eggNOG" id="COG2371">
    <property type="taxonomic scope" value="Bacteria"/>
</dbReference>
<dbReference type="HOGENOM" id="CLU_093757_1_0_5"/>
<dbReference type="OrthoDB" id="9802215at2"/>
<dbReference type="Proteomes" id="UP000000361">
    <property type="component" value="Chromosome 1"/>
</dbReference>
<dbReference type="GO" id="GO:0005737">
    <property type="term" value="C:cytoplasm"/>
    <property type="evidence" value="ECO:0007669"/>
    <property type="project" value="UniProtKB-SubCell"/>
</dbReference>
<dbReference type="GO" id="GO:0016151">
    <property type="term" value="F:nickel cation binding"/>
    <property type="evidence" value="ECO:0007669"/>
    <property type="project" value="UniProtKB-UniRule"/>
</dbReference>
<dbReference type="GO" id="GO:0051082">
    <property type="term" value="F:unfolded protein binding"/>
    <property type="evidence" value="ECO:0007669"/>
    <property type="project" value="UniProtKB-UniRule"/>
</dbReference>
<dbReference type="GO" id="GO:0006457">
    <property type="term" value="P:protein folding"/>
    <property type="evidence" value="ECO:0007669"/>
    <property type="project" value="InterPro"/>
</dbReference>
<dbReference type="GO" id="GO:0065003">
    <property type="term" value="P:protein-containing complex assembly"/>
    <property type="evidence" value="ECO:0007669"/>
    <property type="project" value="InterPro"/>
</dbReference>
<dbReference type="GO" id="GO:0019627">
    <property type="term" value="P:urea metabolic process"/>
    <property type="evidence" value="ECO:0007669"/>
    <property type="project" value="InterPro"/>
</dbReference>
<dbReference type="CDD" id="cd00571">
    <property type="entry name" value="UreE"/>
    <property type="match status" value="1"/>
</dbReference>
<dbReference type="Gene3D" id="2.60.260.20">
    <property type="entry name" value="Urease metallochaperone UreE, N-terminal domain"/>
    <property type="match status" value="1"/>
</dbReference>
<dbReference type="Gene3D" id="3.30.70.790">
    <property type="entry name" value="UreE, C-terminal domain"/>
    <property type="match status" value="1"/>
</dbReference>
<dbReference type="HAMAP" id="MF_00822">
    <property type="entry name" value="UreE"/>
    <property type="match status" value="1"/>
</dbReference>
<dbReference type="InterPro" id="IPR012406">
    <property type="entry name" value="UreE"/>
</dbReference>
<dbReference type="InterPro" id="IPR007864">
    <property type="entry name" value="UreE_C_dom"/>
</dbReference>
<dbReference type="InterPro" id="IPR004029">
    <property type="entry name" value="UreE_N"/>
</dbReference>
<dbReference type="InterPro" id="IPR036118">
    <property type="entry name" value="UreE_N_sf"/>
</dbReference>
<dbReference type="Pfam" id="PF05194">
    <property type="entry name" value="UreE_C"/>
    <property type="match status" value="1"/>
</dbReference>
<dbReference type="Pfam" id="PF02814">
    <property type="entry name" value="UreE_N"/>
    <property type="match status" value="1"/>
</dbReference>
<dbReference type="PIRSF" id="PIRSF036402">
    <property type="entry name" value="Ureas_acces_UreE"/>
    <property type="match status" value="1"/>
</dbReference>
<dbReference type="SMART" id="SM00988">
    <property type="entry name" value="UreE_N"/>
    <property type="match status" value="1"/>
</dbReference>
<dbReference type="SUPFAM" id="SSF69737">
    <property type="entry name" value="Urease metallochaperone UreE, C-terminal domain"/>
    <property type="match status" value="1"/>
</dbReference>
<dbReference type="SUPFAM" id="SSF69287">
    <property type="entry name" value="Urease metallochaperone UreE, N-terminal domain"/>
    <property type="match status" value="1"/>
</dbReference>
<name>UREE_PARDP</name>
<evidence type="ECO:0000255" key="1">
    <source>
        <dbReference type="HAMAP-Rule" id="MF_00822"/>
    </source>
</evidence>
<evidence type="ECO:0000256" key="2">
    <source>
        <dbReference type="SAM" id="MobiDB-lite"/>
    </source>
</evidence>
<reference key="1">
    <citation type="submission" date="2006-12" db="EMBL/GenBank/DDBJ databases">
        <title>Complete sequence of chromosome 1 of Paracoccus denitrificans PD1222.</title>
        <authorList>
            <person name="Copeland A."/>
            <person name="Lucas S."/>
            <person name="Lapidus A."/>
            <person name="Barry K."/>
            <person name="Detter J.C."/>
            <person name="Glavina del Rio T."/>
            <person name="Hammon N."/>
            <person name="Israni S."/>
            <person name="Dalin E."/>
            <person name="Tice H."/>
            <person name="Pitluck S."/>
            <person name="Munk A.C."/>
            <person name="Brettin T."/>
            <person name="Bruce D."/>
            <person name="Han C."/>
            <person name="Tapia R."/>
            <person name="Gilna P."/>
            <person name="Schmutz J."/>
            <person name="Larimer F."/>
            <person name="Land M."/>
            <person name="Hauser L."/>
            <person name="Kyrpides N."/>
            <person name="Lykidis A."/>
            <person name="Spiro S."/>
            <person name="Richardson D.J."/>
            <person name="Moir J.W.B."/>
            <person name="Ferguson S.J."/>
            <person name="van Spanning R.J.M."/>
            <person name="Richardson P."/>
        </authorList>
    </citation>
    <scope>NUCLEOTIDE SEQUENCE [LARGE SCALE GENOMIC DNA]</scope>
    <source>
        <strain>Pd 1222</strain>
    </source>
</reference>
<organism>
    <name type="scientific">Paracoccus denitrificans (strain Pd 1222)</name>
    <dbReference type="NCBI Taxonomy" id="318586"/>
    <lineage>
        <taxon>Bacteria</taxon>
        <taxon>Pseudomonadati</taxon>
        <taxon>Pseudomonadota</taxon>
        <taxon>Alphaproteobacteria</taxon>
        <taxon>Rhodobacterales</taxon>
        <taxon>Paracoccaceae</taxon>
        <taxon>Paracoccus</taxon>
    </lineage>
</organism>
<proteinExistence type="inferred from homology"/>
<protein>
    <recommendedName>
        <fullName evidence="1">Urease accessory protein UreE</fullName>
    </recommendedName>
</protein>
<gene>
    <name evidence="1" type="primary">ureE</name>
    <name type="ordered locus">Pden_1207</name>
</gene>
<comment type="function">
    <text evidence="1">Involved in urease metallocenter assembly. Binds nickel. Probably functions as a nickel donor during metallocenter assembly.</text>
</comment>
<comment type="subcellular location">
    <subcellularLocation>
        <location evidence="1">Cytoplasm</location>
    </subcellularLocation>
</comment>
<comment type="similarity">
    <text evidence="1">Belongs to the UreE family.</text>
</comment>
<feature type="chain" id="PRO_1000197444" description="Urease accessory protein UreE">
    <location>
        <begin position="1"/>
        <end position="154"/>
    </location>
</feature>
<feature type="region of interest" description="Disordered" evidence="2">
    <location>
        <begin position="135"/>
        <end position="154"/>
    </location>
</feature>
<sequence>MIPCSDRIIRNAPGPFDAEVVLDYESRLLRRKRLACAGGDFMVDLAEVASLEDGDAFALSDGRIVVVRAAAEPVLVVRGPLARLAWHIGNRHTPCRIEADRLIIRQDHVLEAMLRRLGAEISHQNLPFRPEGGAYGHGRTFGHDHGHAHDHHHA</sequence>
<keyword id="KW-0143">Chaperone</keyword>
<keyword id="KW-0963">Cytoplasm</keyword>
<keyword id="KW-0533">Nickel</keyword>
<keyword id="KW-1185">Reference proteome</keyword>